<keyword id="KW-1003">Cell membrane</keyword>
<keyword id="KW-0342">GTP-binding</keyword>
<keyword id="KW-0378">Hydrolase</keyword>
<keyword id="KW-0472">Membrane</keyword>
<keyword id="KW-0547">Nucleotide-binding</keyword>
<keyword id="KW-0648">Protein biosynthesis</keyword>
<name>LEPA_LISIN</name>
<dbReference type="EC" id="3.6.5.n1" evidence="1"/>
<dbReference type="EMBL" id="AL596168">
    <property type="protein sequence ID" value="CAC96745.1"/>
    <property type="molecule type" value="Genomic_DNA"/>
</dbReference>
<dbReference type="PIR" id="AI1621">
    <property type="entry name" value="AI1621"/>
</dbReference>
<dbReference type="RefSeq" id="WP_010991571.1">
    <property type="nucleotide sequence ID" value="NC_003212.1"/>
</dbReference>
<dbReference type="SMR" id="Q92BN4"/>
<dbReference type="STRING" id="272626.gene:17565845"/>
<dbReference type="GeneID" id="93234895"/>
<dbReference type="KEGG" id="lin:lepA"/>
<dbReference type="eggNOG" id="COG0481">
    <property type="taxonomic scope" value="Bacteria"/>
</dbReference>
<dbReference type="HOGENOM" id="CLU_009995_3_3_9"/>
<dbReference type="OrthoDB" id="2443343at2"/>
<dbReference type="Proteomes" id="UP000002513">
    <property type="component" value="Chromosome"/>
</dbReference>
<dbReference type="GO" id="GO:0005886">
    <property type="term" value="C:plasma membrane"/>
    <property type="evidence" value="ECO:0007669"/>
    <property type="project" value="UniProtKB-SubCell"/>
</dbReference>
<dbReference type="GO" id="GO:0005525">
    <property type="term" value="F:GTP binding"/>
    <property type="evidence" value="ECO:0007669"/>
    <property type="project" value="UniProtKB-UniRule"/>
</dbReference>
<dbReference type="GO" id="GO:0003924">
    <property type="term" value="F:GTPase activity"/>
    <property type="evidence" value="ECO:0007669"/>
    <property type="project" value="UniProtKB-UniRule"/>
</dbReference>
<dbReference type="GO" id="GO:0043022">
    <property type="term" value="F:ribosome binding"/>
    <property type="evidence" value="ECO:0007669"/>
    <property type="project" value="UniProtKB-UniRule"/>
</dbReference>
<dbReference type="GO" id="GO:0003746">
    <property type="term" value="F:translation elongation factor activity"/>
    <property type="evidence" value="ECO:0007669"/>
    <property type="project" value="UniProtKB-UniRule"/>
</dbReference>
<dbReference type="GO" id="GO:0045727">
    <property type="term" value="P:positive regulation of translation"/>
    <property type="evidence" value="ECO:0007669"/>
    <property type="project" value="UniProtKB-UniRule"/>
</dbReference>
<dbReference type="CDD" id="cd03699">
    <property type="entry name" value="EF4_II"/>
    <property type="match status" value="1"/>
</dbReference>
<dbReference type="CDD" id="cd16260">
    <property type="entry name" value="EF4_III"/>
    <property type="match status" value="1"/>
</dbReference>
<dbReference type="CDD" id="cd01890">
    <property type="entry name" value="LepA"/>
    <property type="match status" value="1"/>
</dbReference>
<dbReference type="CDD" id="cd03709">
    <property type="entry name" value="lepA_C"/>
    <property type="match status" value="1"/>
</dbReference>
<dbReference type="FunFam" id="3.40.50.300:FF:000078">
    <property type="entry name" value="Elongation factor 4"/>
    <property type="match status" value="1"/>
</dbReference>
<dbReference type="FunFam" id="2.40.30.10:FF:000015">
    <property type="entry name" value="Translation factor GUF1, mitochondrial"/>
    <property type="match status" value="1"/>
</dbReference>
<dbReference type="FunFam" id="3.30.70.240:FF:000007">
    <property type="entry name" value="Translation factor GUF1, mitochondrial"/>
    <property type="match status" value="1"/>
</dbReference>
<dbReference type="FunFam" id="3.30.70.2570:FF:000001">
    <property type="entry name" value="Translation factor GUF1, mitochondrial"/>
    <property type="match status" value="1"/>
</dbReference>
<dbReference type="FunFam" id="3.30.70.870:FF:000004">
    <property type="entry name" value="Translation factor GUF1, mitochondrial"/>
    <property type="match status" value="1"/>
</dbReference>
<dbReference type="Gene3D" id="3.30.70.240">
    <property type="match status" value="1"/>
</dbReference>
<dbReference type="Gene3D" id="3.30.70.2570">
    <property type="entry name" value="Elongation factor 4, C-terminal domain"/>
    <property type="match status" value="1"/>
</dbReference>
<dbReference type="Gene3D" id="3.30.70.870">
    <property type="entry name" value="Elongation Factor G (Translational Gtpase), domain 3"/>
    <property type="match status" value="1"/>
</dbReference>
<dbReference type="Gene3D" id="3.40.50.300">
    <property type="entry name" value="P-loop containing nucleotide triphosphate hydrolases"/>
    <property type="match status" value="1"/>
</dbReference>
<dbReference type="Gene3D" id="2.40.30.10">
    <property type="entry name" value="Translation factors"/>
    <property type="match status" value="1"/>
</dbReference>
<dbReference type="HAMAP" id="MF_00071">
    <property type="entry name" value="LepA"/>
    <property type="match status" value="1"/>
</dbReference>
<dbReference type="InterPro" id="IPR006297">
    <property type="entry name" value="EF-4"/>
</dbReference>
<dbReference type="InterPro" id="IPR035647">
    <property type="entry name" value="EFG_III/V"/>
</dbReference>
<dbReference type="InterPro" id="IPR000640">
    <property type="entry name" value="EFG_V-like"/>
</dbReference>
<dbReference type="InterPro" id="IPR004161">
    <property type="entry name" value="EFTu-like_2"/>
</dbReference>
<dbReference type="InterPro" id="IPR031157">
    <property type="entry name" value="G_TR_CS"/>
</dbReference>
<dbReference type="InterPro" id="IPR038363">
    <property type="entry name" value="LepA_C_sf"/>
</dbReference>
<dbReference type="InterPro" id="IPR013842">
    <property type="entry name" value="LepA_CTD"/>
</dbReference>
<dbReference type="InterPro" id="IPR035654">
    <property type="entry name" value="LepA_IV"/>
</dbReference>
<dbReference type="InterPro" id="IPR027417">
    <property type="entry name" value="P-loop_NTPase"/>
</dbReference>
<dbReference type="InterPro" id="IPR005225">
    <property type="entry name" value="Small_GTP-bd"/>
</dbReference>
<dbReference type="InterPro" id="IPR000795">
    <property type="entry name" value="T_Tr_GTP-bd_dom"/>
</dbReference>
<dbReference type="NCBIfam" id="TIGR01393">
    <property type="entry name" value="lepA"/>
    <property type="match status" value="1"/>
</dbReference>
<dbReference type="NCBIfam" id="TIGR00231">
    <property type="entry name" value="small_GTP"/>
    <property type="match status" value="1"/>
</dbReference>
<dbReference type="PANTHER" id="PTHR43512:SF4">
    <property type="entry name" value="TRANSLATION FACTOR GUF1 HOMOLOG, CHLOROPLASTIC"/>
    <property type="match status" value="1"/>
</dbReference>
<dbReference type="PANTHER" id="PTHR43512">
    <property type="entry name" value="TRANSLATION FACTOR GUF1-RELATED"/>
    <property type="match status" value="1"/>
</dbReference>
<dbReference type="Pfam" id="PF00679">
    <property type="entry name" value="EFG_C"/>
    <property type="match status" value="1"/>
</dbReference>
<dbReference type="Pfam" id="PF00009">
    <property type="entry name" value="GTP_EFTU"/>
    <property type="match status" value="1"/>
</dbReference>
<dbReference type="Pfam" id="PF03144">
    <property type="entry name" value="GTP_EFTU_D2"/>
    <property type="match status" value="1"/>
</dbReference>
<dbReference type="Pfam" id="PF06421">
    <property type="entry name" value="LepA_C"/>
    <property type="match status" value="1"/>
</dbReference>
<dbReference type="PRINTS" id="PR00315">
    <property type="entry name" value="ELONGATNFCT"/>
</dbReference>
<dbReference type="SMART" id="SM00838">
    <property type="entry name" value="EFG_C"/>
    <property type="match status" value="1"/>
</dbReference>
<dbReference type="SUPFAM" id="SSF54980">
    <property type="entry name" value="EF-G C-terminal domain-like"/>
    <property type="match status" value="2"/>
</dbReference>
<dbReference type="SUPFAM" id="SSF52540">
    <property type="entry name" value="P-loop containing nucleoside triphosphate hydrolases"/>
    <property type="match status" value="1"/>
</dbReference>
<dbReference type="PROSITE" id="PS00301">
    <property type="entry name" value="G_TR_1"/>
    <property type="match status" value="1"/>
</dbReference>
<dbReference type="PROSITE" id="PS51722">
    <property type="entry name" value="G_TR_2"/>
    <property type="match status" value="1"/>
</dbReference>
<protein>
    <recommendedName>
        <fullName evidence="1">Elongation factor 4</fullName>
        <shortName evidence="1">EF-4</shortName>
        <ecNumber evidence="1">3.6.5.n1</ecNumber>
    </recommendedName>
    <alternativeName>
        <fullName evidence="1">Ribosomal back-translocase LepA</fullName>
    </alternativeName>
</protein>
<feature type="chain" id="PRO_0000176291" description="Elongation factor 4">
    <location>
        <begin position="1"/>
        <end position="608"/>
    </location>
</feature>
<feature type="domain" description="tr-type G">
    <location>
        <begin position="11"/>
        <end position="193"/>
    </location>
</feature>
<feature type="binding site" evidence="1">
    <location>
        <begin position="23"/>
        <end position="28"/>
    </location>
    <ligand>
        <name>GTP</name>
        <dbReference type="ChEBI" id="CHEBI:37565"/>
    </ligand>
</feature>
<feature type="binding site" evidence="1">
    <location>
        <begin position="140"/>
        <end position="143"/>
    </location>
    <ligand>
        <name>GTP</name>
        <dbReference type="ChEBI" id="CHEBI:37565"/>
    </ligand>
</feature>
<evidence type="ECO:0000255" key="1">
    <source>
        <dbReference type="HAMAP-Rule" id="MF_00071"/>
    </source>
</evidence>
<reference key="1">
    <citation type="journal article" date="2001" name="Science">
        <title>Comparative genomics of Listeria species.</title>
        <authorList>
            <person name="Glaser P."/>
            <person name="Frangeul L."/>
            <person name="Buchrieser C."/>
            <person name="Rusniok C."/>
            <person name="Amend A."/>
            <person name="Baquero F."/>
            <person name="Berche P."/>
            <person name="Bloecker H."/>
            <person name="Brandt P."/>
            <person name="Chakraborty T."/>
            <person name="Charbit A."/>
            <person name="Chetouani F."/>
            <person name="Couve E."/>
            <person name="de Daruvar A."/>
            <person name="Dehoux P."/>
            <person name="Domann E."/>
            <person name="Dominguez-Bernal G."/>
            <person name="Duchaud E."/>
            <person name="Durant L."/>
            <person name="Dussurget O."/>
            <person name="Entian K.-D."/>
            <person name="Fsihi H."/>
            <person name="Garcia-del Portillo F."/>
            <person name="Garrido P."/>
            <person name="Gautier L."/>
            <person name="Goebel W."/>
            <person name="Gomez-Lopez N."/>
            <person name="Hain T."/>
            <person name="Hauf J."/>
            <person name="Jackson D."/>
            <person name="Jones L.-M."/>
            <person name="Kaerst U."/>
            <person name="Kreft J."/>
            <person name="Kuhn M."/>
            <person name="Kunst F."/>
            <person name="Kurapkat G."/>
            <person name="Madueno E."/>
            <person name="Maitournam A."/>
            <person name="Mata Vicente J."/>
            <person name="Ng E."/>
            <person name="Nedjari H."/>
            <person name="Nordsiek G."/>
            <person name="Novella S."/>
            <person name="de Pablos B."/>
            <person name="Perez-Diaz J.-C."/>
            <person name="Purcell R."/>
            <person name="Remmel B."/>
            <person name="Rose M."/>
            <person name="Schlueter T."/>
            <person name="Simoes N."/>
            <person name="Tierrez A."/>
            <person name="Vazquez-Boland J.-A."/>
            <person name="Voss H."/>
            <person name="Wehland J."/>
            <person name="Cossart P."/>
        </authorList>
    </citation>
    <scope>NUCLEOTIDE SEQUENCE [LARGE SCALE GENOMIC DNA]</scope>
    <source>
        <strain>ATCC BAA-680 / CLIP 11262</strain>
    </source>
</reference>
<sequence length="608" mass="67782">MNKEEMNARQKKIRNFSIIAHIDHGKSTLADRILEQTGALTHREMKNQLLDSMDLERERGITIKLNAVQLKYKAKDGETYIFHLIDTPGHVDFTYEVSRSLAACEGAILVVDAAQGIEAQTLANVYLALDNDLEILPVINKIDLPAADPERVRAEIEDVIGLDASDTVLASAKSGIGIEDILEQIVEKVPEPSGDVDKPLKALIFDSVFDAYRGVIANIRIMDGVVKAGDRIKMMSNGKEFEVTEVGVFSPKATPRDELLVGDVGYLTAAIKNVGDTRVGDTITLANNPAEEALDGYRKLNPMVYCGLYPIDSSKYNDLRDALEKLELNDSALQFEAETSQALGFGFRCGFLGLLHMEIIQERIEREFNIDLITTAPSVIYHVNLTDGSNIVVDNPADMPEPGVIESVEEPYVKATVMVPNDYVGAVMELAQNKRGNFITMEYLDDIRVSIVYEIPLSEIVYDFFDQLKSSTKGYASFDYELIGYKASKLVKMDILLNAEKVDALSFIVHRDFAYERGKIIVEKLKELIPRQQFEVPIQAAIATKIVSRSTIKALRKNVLAKCYGGDVSRKRKLLEKQKEGKKRMKQIGSVEVPQEAFMAILKMDESK</sequence>
<gene>
    <name evidence="1" type="primary">lepA</name>
    <name type="ordered locus">lin1514</name>
</gene>
<comment type="function">
    <text evidence="1">Required for accurate and efficient protein synthesis under certain stress conditions. May act as a fidelity factor of the translation reaction, by catalyzing a one-codon backward translocation of tRNAs on improperly translocated ribosomes. Back-translocation proceeds from a post-translocation (POST) complex to a pre-translocation (PRE) complex, thus giving elongation factor G a second chance to translocate the tRNAs correctly. Binds to ribosomes in a GTP-dependent manner.</text>
</comment>
<comment type="catalytic activity">
    <reaction evidence="1">
        <text>GTP + H2O = GDP + phosphate + H(+)</text>
        <dbReference type="Rhea" id="RHEA:19669"/>
        <dbReference type="ChEBI" id="CHEBI:15377"/>
        <dbReference type="ChEBI" id="CHEBI:15378"/>
        <dbReference type="ChEBI" id="CHEBI:37565"/>
        <dbReference type="ChEBI" id="CHEBI:43474"/>
        <dbReference type="ChEBI" id="CHEBI:58189"/>
        <dbReference type="EC" id="3.6.5.n1"/>
    </reaction>
</comment>
<comment type="subcellular location">
    <subcellularLocation>
        <location evidence="1">Cell membrane</location>
        <topology evidence="1">Peripheral membrane protein</topology>
        <orientation evidence="1">Cytoplasmic side</orientation>
    </subcellularLocation>
</comment>
<comment type="similarity">
    <text evidence="1">Belongs to the TRAFAC class translation factor GTPase superfamily. Classic translation factor GTPase family. LepA subfamily.</text>
</comment>
<accession>Q92BN4</accession>
<organism>
    <name type="scientific">Listeria innocua serovar 6a (strain ATCC BAA-680 / CLIP 11262)</name>
    <dbReference type="NCBI Taxonomy" id="272626"/>
    <lineage>
        <taxon>Bacteria</taxon>
        <taxon>Bacillati</taxon>
        <taxon>Bacillota</taxon>
        <taxon>Bacilli</taxon>
        <taxon>Bacillales</taxon>
        <taxon>Listeriaceae</taxon>
        <taxon>Listeria</taxon>
    </lineage>
</organism>
<proteinExistence type="inferred from homology"/>